<sequence>MNAAPTVLQQQAQSLSEAVTQPIPGSRKIFVRGSRADLQVPMREIALTRTPTLFGGEENPPLSVYDTSGPYTDPRVAIDLAAGLAPLRAQWIAERGDTLALDGLSSSFGRGREHDARLDAVRFPARRLPRVARQGANVTQMHYARRGIITPEMEYVAIRENQRLEAVTDASLRKQHPGQAFGASIQQRITPEFVREEIARGRAILPNNINHPESEPMIIGRNFLTKINANIGNSAVSSGIAEEVEKLVWSIRWGGDTVMDLSTGKHIHETREWIIRNSPVPIGTVPIYQALEKVDGRAEELTWDIFRDTLIEQAEQGVDYFTIHAGVLLRYVPLTAKRVTGIVSRGGSIMAKWCLAHHKENFLYTHFEDICQIMKAYDVAFSLGDGLRPGCIADANDAAQFGELETLGELTKLAWQHDVQTMIEGPGHVPMQLIKENMDKQLRECGEAPFYTLGPLTTDIAPGYDHITSAIGAAMIGWFGTAMLCYVTPKEHLGLPNRQDVRDGIMAYKIAAHAADLAKGHPGAQVRDNALSKARFEFRWDDQFHLGLDPEKAKEFHDETLPKDAHKLAHFCSMCGPHFCSMKITQDVRDYANEHGVSEAQALSTGMQEKSAQFVAQGAQVYRAT</sequence>
<comment type="function">
    <text evidence="1">Catalyzes the synthesis of the hydroxymethylpyrimidine phosphate (HMP-P) moiety of thiamine from aminoimidazole ribotide (AIR) in a radical S-adenosyl-L-methionine (SAM)-dependent reaction.</text>
</comment>
<comment type="catalytic activity">
    <reaction evidence="1">
        <text>5-amino-1-(5-phospho-beta-D-ribosyl)imidazole + S-adenosyl-L-methionine = 4-amino-2-methyl-5-(phosphooxymethyl)pyrimidine + CO + 5'-deoxyadenosine + formate + L-methionine + 3 H(+)</text>
        <dbReference type="Rhea" id="RHEA:24840"/>
        <dbReference type="ChEBI" id="CHEBI:15378"/>
        <dbReference type="ChEBI" id="CHEBI:15740"/>
        <dbReference type="ChEBI" id="CHEBI:17245"/>
        <dbReference type="ChEBI" id="CHEBI:17319"/>
        <dbReference type="ChEBI" id="CHEBI:57844"/>
        <dbReference type="ChEBI" id="CHEBI:58354"/>
        <dbReference type="ChEBI" id="CHEBI:59789"/>
        <dbReference type="ChEBI" id="CHEBI:137981"/>
        <dbReference type="EC" id="4.1.99.17"/>
    </reaction>
</comment>
<comment type="cofactor">
    <cofactor evidence="1">
        <name>[4Fe-4S] cluster</name>
        <dbReference type="ChEBI" id="CHEBI:49883"/>
    </cofactor>
    <text evidence="1">Binds 1 [4Fe-4S] cluster per subunit. The cluster is coordinated with 3 cysteines and an exchangeable S-adenosyl-L-methionine.</text>
</comment>
<comment type="pathway">
    <text evidence="1">Cofactor biosynthesis; thiamine diphosphate biosynthesis.</text>
</comment>
<comment type="subunit">
    <text evidence="1">Homodimer.</text>
</comment>
<comment type="similarity">
    <text evidence="1">Belongs to the ThiC family.</text>
</comment>
<protein>
    <recommendedName>
        <fullName evidence="1">Phosphomethylpyrimidine synthase</fullName>
        <ecNumber evidence="1">4.1.99.17</ecNumber>
    </recommendedName>
    <alternativeName>
        <fullName evidence="1">Hydroxymethylpyrimidine phosphate synthase</fullName>
        <shortName evidence="1">HMP-P synthase</shortName>
        <shortName evidence="1">HMP-phosphate synthase</shortName>
        <shortName evidence="1">HMPP synthase</shortName>
    </alternativeName>
    <alternativeName>
        <fullName evidence="1">Thiamine biosynthesis protein ThiC</fullName>
    </alternativeName>
</protein>
<accession>Q8PH13</accession>
<dbReference type="EC" id="4.1.99.17" evidence="1"/>
<dbReference type="EMBL" id="AE008923">
    <property type="protein sequence ID" value="AAM38290.1"/>
    <property type="molecule type" value="Genomic_DNA"/>
</dbReference>
<dbReference type="RefSeq" id="WP_011052285.1">
    <property type="nucleotide sequence ID" value="NC_003919.1"/>
</dbReference>
<dbReference type="SMR" id="Q8PH13"/>
<dbReference type="GeneID" id="66912490"/>
<dbReference type="KEGG" id="xac:XAC3447"/>
<dbReference type="eggNOG" id="COG0422">
    <property type="taxonomic scope" value="Bacteria"/>
</dbReference>
<dbReference type="HOGENOM" id="CLU_013181_2_1_6"/>
<dbReference type="UniPathway" id="UPA00060"/>
<dbReference type="Proteomes" id="UP000000576">
    <property type="component" value="Chromosome"/>
</dbReference>
<dbReference type="GO" id="GO:0005829">
    <property type="term" value="C:cytosol"/>
    <property type="evidence" value="ECO:0007669"/>
    <property type="project" value="TreeGrafter"/>
</dbReference>
<dbReference type="GO" id="GO:0051539">
    <property type="term" value="F:4 iron, 4 sulfur cluster binding"/>
    <property type="evidence" value="ECO:0007669"/>
    <property type="project" value="UniProtKB-KW"/>
</dbReference>
<dbReference type="GO" id="GO:0016830">
    <property type="term" value="F:carbon-carbon lyase activity"/>
    <property type="evidence" value="ECO:0007669"/>
    <property type="project" value="InterPro"/>
</dbReference>
<dbReference type="GO" id="GO:0008270">
    <property type="term" value="F:zinc ion binding"/>
    <property type="evidence" value="ECO:0007669"/>
    <property type="project" value="UniProtKB-UniRule"/>
</dbReference>
<dbReference type="GO" id="GO:0009228">
    <property type="term" value="P:thiamine biosynthetic process"/>
    <property type="evidence" value="ECO:0007669"/>
    <property type="project" value="UniProtKB-KW"/>
</dbReference>
<dbReference type="GO" id="GO:0009229">
    <property type="term" value="P:thiamine diphosphate biosynthetic process"/>
    <property type="evidence" value="ECO:0007669"/>
    <property type="project" value="UniProtKB-UniRule"/>
</dbReference>
<dbReference type="FunFam" id="3.20.20.540:FF:000001">
    <property type="entry name" value="Phosphomethylpyrimidine synthase"/>
    <property type="match status" value="1"/>
</dbReference>
<dbReference type="Gene3D" id="6.10.250.620">
    <property type="match status" value="1"/>
</dbReference>
<dbReference type="Gene3D" id="3.20.20.540">
    <property type="entry name" value="Radical SAM ThiC family, central domain"/>
    <property type="match status" value="1"/>
</dbReference>
<dbReference type="HAMAP" id="MF_00089">
    <property type="entry name" value="ThiC"/>
    <property type="match status" value="1"/>
</dbReference>
<dbReference type="InterPro" id="IPR037509">
    <property type="entry name" value="ThiC"/>
</dbReference>
<dbReference type="InterPro" id="IPR025747">
    <property type="entry name" value="ThiC-associated_dom"/>
</dbReference>
<dbReference type="InterPro" id="IPR038521">
    <property type="entry name" value="ThiC/Bza_core_dom"/>
</dbReference>
<dbReference type="InterPro" id="IPR002817">
    <property type="entry name" value="ThiC/BzaA/B"/>
</dbReference>
<dbReference type="NCBIfam" id="NF006763">
    <property type="entry name" value="PRK09284.1"/>
    <property type="match status" value="1"/>
</dbReference>
<dbReference type="NCBIfam" id="NF009895">
    <property type="entry name" value="PRK13352.1"/>
    <property type="match status" value="1"/>
</dbReference>
<dbReference type="NCBIfam" id="TIGR00190">
    <property type="entry name" value="thiC"/>
    <property type="match status" value="1"/>
</dbReference>
<dbReference type="PANTHER" id="PTHR30557:SF1">
    <property type="entry name" value="PHOSPHOMETHYLPYRIMIDINE SYNTHASE, CHLOROPLASTIC"/>
    <property type="match status" value="1"/>
</dbReference>
<dbReference type="PANTHER" id="PTHR30557">
    <property type="entry name" value="THIAMINE BIOSYNTHESIS PROTEIN THIC"/>
    <property type="match status" value="1"/>
</dbReference>
<dbReference type="Pfam" id="PF13667">
    <property type="entry name" value="ThiC-associated"/>
    <property type="match status" value="1"/>
</dbReference>
<dbReference type="Pfam" id="PF01964">
    <property type="entry name" value="ThiC_Rad_SAM"/>
    <property type="match status" value="1"/>
</dbReference>
<dbReference type="SFLD" id="SFLDF00407">
    <property type="entry name" value="phosphomethylpyrimidine_syntha"/>
    <property type="match status" value="1"/>
</dbReference>
<dbReference type="SFLD" id="SFLDG01114">
    <property type="entry name" value="phosphomethylpyrimidine_syntha"/>
    <property type="match status" value="1"/>
</dbReference>
<dbReference type="SFLD" id="SFLDS00113">
    <property type="entry name" value="Radical_SAM_Phosphomethylpyrim"/>
    <property type="match status" value="1"/>
</dbReference>
<evidence type="ECO:0000255" key="1">
    <source>
        <dbReference type="HAMAP-Rule" id="MF_00089"/>
    </source>
</evidence>
<reference key="1">
    <citation type="journal article" date="2002" name="Nature">
        <title>Comparison of the genomes of two Xanthomonas pathogens with differing host specificities.</title>
        <authorList>
            <person name="da Silva A.C.R."/>
            <person name="Ferro J.A."/>
            <person name="Reinach F.C."/>
            <person name="Farah C.S."/>
            <person name="Furlan L.R."/>
            <person name="Quaggio R.B."/>
            <person name="Monteiro-Vitorello C.B."/>
            <person name="Van Sluys M.A."/>
            <person name="Almeida N.F. Jr."/>
            <person name="Alves L.M.C."/>
            <person name="do Amaral A.M."/>
            <person name="Bertolini M.C."/>
            <person name="Camargo L.E.A."/>
            <person name="Camarotte G."/>
            <person name="Cannavan F."/>
            <person name="Cardozo J."/>
            <person name="Chambergo F."/>
            <person name="Ciapina L.P."/>
            <person name="Cicarelli R.M.B."/>
            <person name="Coutinho L.L."/>
            <person name="Cursino-Santos J.R."/>
            <person name="El-Dorry H."/>
            <person name="Faria J.B."/>
            <person name="Ferreira A.J.S."/>
            <person name="Ferreira R.C.C."/>
            <person name="Ferro M.I.T."/>
            <person name="Formighieri E.F."/>
            <person name="Franco M.C."/>
            <person name="Greggio C.C."/>
            <person name="Gruber A."/>
            <person name="Katsuyama A.M."/>
            <person name="Kishi L.T."/>
            <person name="Leite R.P."/>
            <person name="Lemos E.G.M."/>
            <person name="Lemos M.V.F."/>
            <person name="Locali E.C."/>
            <person name="Machado M.A."/>
            <person name="Madeira A.M.B.N."/>
            <person name="Martinez-Rossi N.M."/>
            <person name="Martins E.C."/>
            <person name="Meidanis J."/>
            <person name="Menck C.F.M."/>
            <person name="Miyaki C.Y."/>
            <person name="Moon D.H."/>
            <person name="Moreira L.M."/>
            <person name="Novo M.T.M."/>
            <person name="Okura V.K."/>
            <person name="Oliveira M.C."/>
            <person name="Oliveira V.R."/>
            <person name="Pereira H.A."/>
            <person name="Rossi A."/>
            <person name="Sena J.A.D."/>
            <person name="Silva C."/>
            <person name="de Souza R.F."/>
            <person name="Spinola L.A.F."/>
            <person name="Takita M.A."/>
            <person name="Tamura R.E."/>
            <person name="Teixeira E.C."/>
            <person name="Tezza R.I.D."/>
            <person name="Trindade dos Santos M."/>
            <person name="Truffi D."/>
            <person name="Tsai S.M."/>
            <person name="White F.F."/>
            <person name="Setubal J.C."/>
            <person name="Kitajima J.P."/>
        </authorList>
    </citation>
    <scope>NUCLEOTIDE SEQUENCE [LARGE SCALE GENOMIC DNA]</scope>
    <source>
        <strain>306</strain>
    </source>
</reference>
<gene>
    <name evidence="1" type="primary">thiC</name>
    <name type="ordered locus">XAC3447</name>
</gene>
<feature type="chain" id="PRO_0000152851" description="Phosphomethylpyrimidine synthase">
    <location>
        <begin position="1"/>
        <end position="625"/>
    </location>
</feature>
<feature type="binding site" evidence="1">
    <location>
        <position position="230"/>
    </location>
    <ligand>
        <name>substrate</name>
    </ligand>
</feature>
<feature type="binding site" evidence="1">
    <location>
        <position position="259"/>
    </location>
    <ligand>
        <name>substrate</name>
    </ligand>
</feature>
<feature type="binding site" evidence="1">
    <location>
        <position position="288"/>
    </location>
    <ligand>
        <name>substrate</name>
    </ligand>
</feature>
<feature type="binding site" evidence="1">
    <location>
        <position position="324"/>
    </location>
    <ligand>
        <name>substrate</name>
    </ligand>
</feature>
<feature type="binding site" evidence="1">
    <location>
        <begin position="344"/>
        <end position="346"/>
    </location>
    <ligand>
        <name>substrate</name>
    </ligand>
</feature>
<feature type="binding site" evidence="1">
    <location>
        <begin position="385"/>
        <end position="388"/>
    </location>
    <ligand>
        <name>substrate</name>
    </ligand>
</feature>
<feature type="binding site" evidence="1">
    <location>
        <position position="424"/>
    </location>
    <ligand>
        <name>substrate</name>
    </ligand>
</feature>
<feature type="binding site" evidence="1">
    <location>
        <position position="428"/>
    </location>
    <ligand>
        <name>Zn(2+)</name>
        <dbReference type="ChEBI" id="CHEBI:29105"/>
    </ligand>
</feature>
<feature type="binding site" evidence="1">
    <location>
        <position position="451"/>
    </location>
    <ligand>
        <name>substrate</name>
    </ligand>
</feature>
<feature type="binding site" evidence="1">
    <location>
        <position position="492"/>
    </location>
    <ligand>
        <name>Zn(2+)</name>
        <dbReference type="ChEBI" id="CHEBI:29105"/>
    </ligand>
</feature>
<feature type="binding site" evidence="1">
    <location>
        <position position="572"/>
    </location>
    <ligand>
        <name>[4Fe-4S] cluster</name>
        <dbReference type="ChEBI" id="CHEBI:49883"/>
        <note>4Fe-4S-S-AdoMet</note>
    </ligand>
</feature>
<feature type="binding site" evidence="1">
    <location>
        <position position="575"/>
    </location>
    <ligand>
        <name>[4Fe-4S] cluster</name>
        <dbReference type="ChEBI" id="CHEBI:49883"/>
        <note>4Fe-4S-S-AdoMet</note>
    </ligand>
</feature>
<feature type="binding site" evidence="1">
    <location>
        <position position="580"/>
    </location>
    <ligand>
        <name>[4Fe-4S] cluster</name>
        <dbReference type="ChEBI" id="CHEBI:49883"/>
        <note>4Fe-4S-S-AdoMet</note>
    </ligand>
</feature>
<proteinExistence type="inferred from homology"/>
<keyword id="KW-0004">4Fe-4S</keyword>
<keyword id="KW-0408">Iron</keyword>
<keyword id="KW-0411">Iron-sulfur</keyword>
<keyword id="KW-0456">Lyase</keyword>
<keyword id="KW-0479">Metal-binding</keyword>
<keyword id="KW-0949">S-adenosyl-L-methionine</keyword>
<keyword id="KW-0784">Thiamine biosynthesis</keyword>
<keyword id="KW-0862">Zinc</keyword>
<organism>
    <name type="scientific">Xanthomonas axonopodis pv. citri (strain 306)</name>
    <dbReference type="NCBI Taxonomy" id="190486"/>
    <lineage>
        <taxon>Bacteria</taxon>
        <taxon>Pseudomonadati</taxon>
        <taxon>Pseudomonadota</taxon>
        <taxon>Gammaproteobacteria</taxon>
        <taxon>Lysobacterales</taxon>
        <taxon>Lysobacteraceae</taxon>
        <taxon>Xanthomonas</taxon>
    </lineage>
</organism>
<name>THIC_XANAC</name>